<comment type="function">
    <text evidence="1">Mitochondrial membrane ATP synthase (F(1)F(0) ATP synthase or Complex V) produces ATP from ADP in the presence of a proton gradient across the membrane which is generated by electron transport complexes of the respiratory chain. F-type ATPases consist of two structural domains, F(1) - containing the extramembraneous catalytic core and F(0) - containing the membrane proton channel, linked together by a central stalk and a peripheral stalk. During catalysis, ATP synthesis in the catalytic domain of F(1) is coupled via a rotary mechanism of the central stalk subunits to proton translocation. Part of the complex F(0) domain. Minor subunit located with subunit a in the membrane (By similarity).</text>
</comment>
<comment type="subunit">
    <text evidence="1">F-type ATPases have 2 components, CF(1) - the catalytic core - and CF(0) - the membrane proton channel.</text>
</comment>
<comment type="subcellular location">
    <subcellularLocation>
        <location>Mitochondrion membrane</location>
        <topology>Single-pass membrane protein</topology>
    </subcellularLocation>
</comment>
<comment type="similarity">
    <text evidence="3">Belongs to the ATPase protein 8 family.</text>
</comment>
<keyword id="KW-0066">ATP synthesis</keyword>
<keyword id="KW-0138">CF(0)</keyword>
<keyword id="KW-0375">Hydrogen ion transport</keyword>
<keyword id="KW-0406">Ion transport</keyword>
<keyword id="KW-0472">Membrane</keyword>
<keyword id="KW-0496">Mitochondrion</keyword>
<keyword id="KW-0812">Transmembrane</keyword>
<keyword id="KW-1133">Transmembrane helix</keyword>
<keyword id="KW-0813">Transport</keyword>
<sequence>MPQLSPMNGLLIMFSVTLMLLIVLVINHFMLTPMASPLLASHLKTKKSGGEKLYY</sequence>
<reference key="1">
    <citation type="journal article" date="1995" name="Genetics">
        <title>Complete sequence and gene organization of the mitochondrial genome of the land snail Albinaria coerulea.</title>
        <authorList>
            <person name="Hatzoglou E."/>
            <person name="Rodakis G.C."/>
            <person name="Lecanidou R."/>
        </authorList>
    </citation>
    <scope>NUCLEOTIDE SEQUENCE [GENOMIC DNA]</scope>
</reference>
<gene>
    <name type="primary">MT-ATP8</name>
    <name type="synonym">ATP8</name>
    <name type="synonym">ATPASE8</name>
    <name type="synonym">MTATP8</name>
</gene>
<name>ATP8_ALBCA</name>
<proteinExistence type="inferred from homology"/>
<organism>
    <name type="scientific">Albinaria caerulea</name>
    <name type="common">Land snail</name>
    <dbReference type="NCBI Taxonomy" id="42349"/>
    <lineage>
        <taxon>Eukaryota</taxon>
        <taxon>Metazoa</taxon>
        <taxon>Spiralia</taxon>
        <taxon>Lophotrochozoa</taxon>
        <taxon>Mollusca</taxon>
        <taxon>Gastropoda</taxon>
        <taxon>Heterobranchia</taxon>
        <taxon>Euthyneura</taxon>
        <taxon>Panpulmonata</taxon>
        <taxon>Eupulmonata</taxon>
        <taxon>Stylommatophora</taxon>
        <taxon>Helicina</taxon>
        <taxon>Clausilioidea</taxon>
        <taxon>Clausiliidae</taxon>
        <taxon>Alopiinae</taxon>
        <taxon>Albinaria</taxon>
    </lineage>
</organism>
<feature type="chain" id="PRO_0000195478" description="ATP synthase protein 8">
    <location>
        <begin position="1"/>
        <end position="55"/>
    </location>
</feature>
<feature type="transmembrane region" description="Helical" evidence="2">
    <location>
        <begin position="11"/>
        <end position="31"/>
    </location>
</feature>
<evidence type="ECO:0000250" key="1"/>
<evidence type="ECO:0000255" key="2"/>
<evidence type="ECO:0000305" key="3"/>
<protein>
    <recommendedName>
        <fullName>ATP synthase protein 8</fullName>
    </recommendedName>
    <alternativeName>
        <fullName>A6L</fullName>
    </alternativeName>
    <alternativeName>
        <fullName>F-ATPase subunit 8</fullName>
    </alternativeName>
</protein>
<dbReference type="EMBL" id="X83390">
    <property type="protein sequence ID" value="CAA58301.1"/>
    <property type="molecule type" value="Genomic_DNA"/>
</dbReference>
<dbReference type="PIR" id="S59148">
    <property type="entry name" value="S59148"/>
</dbReference>
<dbReference type="RefSeq" id="NP_007334.1">
    <property type="nucleotide sequence ID" value="NC_001761.1"/>
</dbReference>
<dbReference type="SMR" id="P48895"/>
<dbReference type="GeneID" id="808002"/>
<dbReference type="CTD" id="4509"/>
<dbReference type="GO" id="GO:0031966">
    <property type="term" value="C:mitochondrial membrane"/>
    <property type="evidence" value="ECO:0007669"/>
    <property type="project" value="UniProtKB-SubCell"/>
</dbReference>
<dbReference type="GO" id="GO:0045259">
    <property type="term" value="C:proton-transporting ATP synthase complex"/>
    <property type="evidence" value="ECO:0007669"/>
    <property type="project" value="UniProtKB-KW"/>
</dbReference>
<dbReference type="GO" id="GO:0006754">
    <property type="term" value="P:ATP biosynthetic process"/>
    <property type="evidence" value="ECO:0007669"/>
    <property type="project" value="UniProtKB-KW"/>
</dbReference>
<dbReference type="GO" id="GO:1902600">
    <property type="term" value="P:proton transmembrane transport"/>
    <property type="evidence" value="ECO:0007669"/>
    <property type="project" value="UniProtKB-KW"/>
</dbReference>
<accession>P48895</accession>
<geneLocation type="mitochondrion"/>